<protein>
    <recommendedName>
        <fullName evidence="1">Protein E7</fullName>
    </recommendedName>
</protein>
<gene>
    <name evidence="1" type="primary">E7</name>
</gene>
<evidence type="ECO:0000255" key="1">
    <source>
        <dbReference type="HAMAP-Rule" id="MF_04004"/>
    </source>
</evidence>
<accession>Q80908</accession>
<sequence>MIGKQATLRDIVLEELVQPIDLHCHEELPDLPEDIEASVVEEEPAYTPYKIIVLCGGCEVRLKLYVWATDAGIRNLQDCLLGDVRLLCPTCREDIRNGGR</sequence>
<reference key="1">
    <citation type="submission" date="1995-10" db="EMBL/GenBank/DDBJ databases">
        <authorList>
            <person name="Delius H."/>
        </authorList>
    </citation>
    <scope>NUCLEOTIDE SEQUENCE [GENOMIC DNA]</scope>
</reference>
<reference key="2">
    <citation type="journal article" date="2002" name="Rev. Med. Virol.">
        <title>Interactions of SV40 large T antigen and other viral proteins with retinoblastoma tumour suppressor.</title>
        <authorList>
            <person name="Lee C."/>
            <person name="Cho Y."/>
        </authorList>
    </citation>
    <scope>REVIEW</scope>
</reference>
<dbReference type="EMBL" id="U31787">
    <property type="protein sequence ID" value="AAA79451.1"/>
    <property type="molecule type" value="Genomic_DNA"/>
</dbReference>
<dbReference type="SMR" id="Q80908"/>
<dbReference type="IntAct" id="Q80908">
    <property type="interactions" value="1"/>
</dbReference>
<dbReference type="Proteomes" id="UP000009166">
    <property type="component" value="Genome"/>
</dbReference>
<dbReference type="GO" id="GO:0030430">
    <property type="term" value="C:host cell cytoplasm"/>
    <property type="evidence" value="ECO:0007669"/>
    <property type="project" value="UniProtKB-SubCell"/>
</dbReference>
<dbReference type="GO" id="GO:0042025">
    <property type="term" value="C:host cell nucleus"/>
    <property type="evidence" value="ECO:0007669"/>
    <property type="project" value="UniProtKB-SubCell"/>
</dbReference>
<dbReference type="GO" id="GO:0003677">
    <property type="term" value="F:DNA binding"/>
    <property type="evidence" value="ECO:0007669"/>
    <property type="project" value="UniProtKB-UniRule"/>
</dbReference>
<dbReference type="GO" id="GO:0003700">
    <property type="term" value="F:DNA-binding transcription factor activity"/>
    <property type="evidence" value="ECO:0007669"/>
    <property type="project" value="UniProtKB-UniRule"/>
</dbReference>
<dbReference type="GO" id="GO:0019904">
    <property type="term" value="F:protein domain specific binding"/>
    <property type="evidence" value="ECO:0007669"/>
    <property type="project" value="UniProtKB-UniRule"/>
</dbReference>
<dbReference type="GO" id="GO:0008270">
    <property type="term" value="F:zinc ion binding"/>
    <property type="evidence" value="ECO:0007669"/>
    <property type="project" value="UniProtKB-KW"/>
</dbReference>
<dbReference type="GO" id="GO:0006351">
    <property type="term" value="P:DNA-templated transcription"/>
    <property type="evidence" value="ECO:0007669"/>
    <property type="project" value="UniProtKB-UniRule"/>
</dbReference>
<dbReference type="GO" id="GO:0039645">
    <property type="term" value="P:symbiont-mediated perturbation of host cell cycle G1/S transition checkpoint"/>
    <property type="evidence" value="ECO:0007669"/>
    <property type="project" value="UniProtKB-UniRule"/>
</dbReference>
<dbReference type="GO" id="GO:0052170">
    <property type="term" value="P:symbiont-mediated suppression of host innate immune response"/>
    <property type="evidence" value="ECO:0007669"/>
    <property type="project" value="UniProtKB-KW"/>
</dbReference>
<dbReference type="GO" id="GO:0039502">
    <property type="term" value="P:symbiont-mediated suppression of host type I interferon-mediated signaling pathway"/>
    <property type="evidence" value="ECO:0007669"/>
    <property type="project" value="UniProtKB-UniRule"/>
</dbReference>
<dbReference type="Gene3D" id="3.30.160.330">
    <property type="match status" value="1"/>
</dbReference>
<dbReference type="HAMAP" id="MF_04004">
    <property type="entry name" value="PPV_E7"/>
    <property type="match status" value="1"/>
</dbReference>
<dbReference type="InterPro" id="IPR000148">
    <property type="entry name" value="Papilloma_E7"/>
</dbReference>
<dbReference type="Pfam" id="PF00527">
    <property type="entry name" value="E7"/>
    <property type="match status" value="1"/>
</dbReference>
<dbReference type="PIRSF" id="PIRSF003407">
    <property type="entry name" value="Papvi_E7"/>
    <property type="match status" value="1"/>
</dbReference>
<dbReference type="SUPFAM" id="SSF161234">
    <property type="entry name" value="E7 C-terminal domain-like"/>
    <property type="match status" value="1"/>
</dbReference>
<feature type="chain" id="PRO_0000133436" description="Protein E7">
    <location>
        <begin position="1"/>
        <end position="100"/>
    </location>
</feature>
<feature type="zinc finger region" evidence="1">
    <location>
        <begin position="55"/>
        <end position="91"/>
    </location>
</feature>
<feature type="region of interest" description="E7 terminal domain" evidence="1">
    <location>
        <begin position="1"/>
        <end position="43"/>
    </location>
</feature>
<feature type="short sequence motif" description="LXCXE motif; interaction with host RB1 and TMEM173/STING" evidence="1">
    <location>
        <begin position="22"/>
        <end position="26"/>
    </location>
</feature>
<feature type="short sequence motif" description="Nuclear export signal" evidence="1">
    <location>
        <begin position="73"/>
        <end position="81"/>
    </location>
</feature>
<proteinExistence type="inferred from homology"/>
<organismHost>
    <name type="scientific">Homo sapiens</name>
    <name type="common">Human</name>
    <dbReference type="NCBI Taxonomy" id="9606"/>
</organismHost>
<organism>
    <name type="scientific">Human papillomavirus 38</name>
    <dbReference type="NCBI Taxonomy" id="37959"/>
    <lineage>
        <taxon>Viruses</taxon>
        <taxon>Monodnaviria</taxon>
        <taxon>Shotokuvirae</taxon>
        <taxon>Cossaviricota</taxon>
        <taxon>Papovaviricetes</taxon>
        <taxon>Zurhausenvirales</taxon>
        <taxon>Papillomaviridae</taxon>
        <taxon>Firstpapillomavirinae</taxon>
        <taxon>Betapapillomavirus</taxon>
        <taxon>Betapapillomavirus 2</taxon>
    </lineage>
</organism>
<name>VE7_HPV38</name>
<comment type="function">
    <text evidence="1">Plays a role in viral genome replication by driving entry of quiescent cells into the cell cycle. Stimulation of progression from G1 to S phase allows the virus to efficiently use the cellular DNA replicating machinery to achieve viral genome replication. E7 protein has both transforming and trans-activating activities. Induces the disassembly of the E2F1 transcription factor from RB1, with subsequent transcriptional activation of E2F1-regulated S-phase genes. Interferes with host histone deacetylation mediated by HDAC1 and HDAC2, leading to transcription activation. Also plays a role in the inhibition of both antiviral and antiproliferative functions of host interferon alpha. Interaction with host TMEM173/STING impairs the ability of TMEM173/STING to sense cytosolic DNA and promote the production of type I interferon (IFN-alpha and IFN-beta).</text>
</comment>
<comment type="subunit">
    <text evidence="1">Homodimer. Homooligomer. Interacts with host RB1; this interaction induces dissociation of RB1-E2F1 complex thereby disrupting RB1 activity. Interacts with host EP300; this interaction represses EP300 transcriptional activity. Interacts with protein E2; this interaction inhibits E7 oncogenic activity. Interacts with host TMEM173/STING; this interaction impairs the ability of TMEM173/STING to sense cytosolic DNA and promote the production of type I interferon (IFN-alpha and IFN-beta).</text>
</comment>
<comment type="subcellular location">
    <subcellularLocation>
        <location evidence="1">Host cytoplasm</location>
    </subcellularLocation>
    <subcellularLocation>
        <location evidence="1">Host nucleus</location>
    </subcellularLocation>
    <text evidence="1">Predominantly found in the host nucleus.</text>
</comment>
<comment type="domain">
    <text evidence="1">The E7 terminal domain is an intrinsically disordered domain, whose flexibility and conformational transitions confer target adaptability to the oncoprotein. It allows adaptation to a variety of protein targets and exposes the PEST degradation sequence that regulates its turnover in the cell.</text>
</comment>
<comment type="PTM">
    <text evidence="1">Highly phosphorylated.</text>
</comment>
<comment type="similarity">
    <text evidence="1">Belongs to the papillomaviridae E7 protein family.</text>
</comment>
<keyword id="KW-0010">Activator</keyword>
<keyword id="KW-0238">DNA-binding</keyword>
<keyword id="KW-0244">Early protein</keyword>
<keyword id="KW-1078">G1/S host cell cycle checkpoint dysregulation by virus</keyword>
<keyword id="KW-1035">Host cytoplasm</keyword>
<keyword id="KW-1048">Host nucleus</keyword>
<keyword id="KW-0945">Host-virus interaction</keyword>
<keyword id="KW-1090">Inhibition of host innate immune response by virus</keyword>
<keyword id="KW-1114">Inhibition of host interferon signaling pathway by virus</keyword>
<keyword id="KW-0922">Interferon antiviral system evasion</keyword>
<keyword id="KW-0479">Metal-binding</keyword>
<keyword id="KW-1121">Modulation of host cell cycle by virus</keyword>
<keyword id="KW-0553">Oncogene</keyword>
<keyword id="KW-0804">Transcription</keyword>
<keyword id="KW-0805">Transcription regulation</keyword>
<keyword id="KW-0899">Viral immunoevasion</keyword>
<keyword id="KW-0862">Zinc</keyword>
<keyword id="KW-0863">Zinc-finger</keyword>